<gene>
    <name evidence="1" type="primary">ureA</name>
</gene>
<comment type="catalytic activity">
    <reaction evidence="1 2 5 7 9 10 12 13 14 17">
        <text>urea + 2 H2O + H(+) = hydrogencarbonate + 2 NH4(+)</text>
        <dbReference type="Rhea" id="RHEA:20557"/>
        <dbReference type="ChEBI" id="CHEBI:15377"/>
        <dbReference type="ChEBI" id="CHEBI:15378"/>
        <dbReference type="ChEBI" id="CHEBI:16199"/>
        <dbReference type="ChEBI" id="CHEBI:17544"/>
        <dbReference type="ChEBI" id="CHEBI:28938"/>
        <dbReference type="EC" id="3.5.1.5"/>
    </reaction>
</comment>
<comment type="activity regulation">
    <text evidence="2 5 12 17">The apoenzyme can be activated in vitro in the presence of nickel ions and carbon dioxide, which promotes carbamylation of 'Lys-217' of the UreC (alpha) subunit.</text>
</comment>
<comment type="biophysicochemical properties">
    <kinetics>
        <KM evidence="4 6 7 14">2.3 mM for urea</KM>
        <Vmax evidence="4 6 7 14">1.9 mmol/min/mg enzyme</Vmax>
    </kinetics>
    <phDependence>
        <text evidence="4 6 7 14">Optimum pH is 7.75.</text>
    </phDependence>
</comment>
<comment type="pathway">
    <text evidence="1">Nitrogen metabolism; urea degradation; CO(2) and NH(3) from urea (urease route): step 1/1.</text>
</comment>
<comment type="subunit">
    <text evidence="1 2 3 4 8 10 11 13 15 16 17 18 19">Heterotrimer of UreA (gamma), UreB (beta) and UreC (alpha) subunits. Three heterotrimers associate to form the active enzyme. The apoenzyme interacts with an accessory complex composed of UreD, UreF and UreG, which is required for the assembly of the nickel containing metallocenter of UreC. The UreE protein may also play a direct role as a metallochaperone in nickel transfer to the urease apoprotein.</text>
</comment>
<comment type="interaction">
    <interactant intactId="EBI-1028581">
        <id>P18316</id>
    </interactant>
    <interactant intactId="EBI-1028571">
        <id>P18314</id>
        <label>ureC</label>
    </interactant>
    <organismsDiffer>false</organismsDiffer>
    <experiments>11</experiments>
</comment>
<comment type="subcellular location">
    <subcellularLocation>
        <location evidence="1">Cytoplasm</location>
    </subcellularLocation>
</comment>
<comment type="similarity">
    <text evidence="1">Belongs to the urease gamma subunit family.</text>
</comment>
<protein>
    <recommendedName>
        <fullName evidence="1">Urease subunit gamma</fullName>
        <ecNumber evidence="1">3.5.1.5</ecNumber>
    </recommendedName>
    <alternativeName>
        <fullName evidence="1">Urea amidohydrolase subunit gamma</fullName>
    </alternativeName>
</protein>
<dbReference type="EC" id="3.5.1.5" evidence="1"/>
<dbReference type="EMBL" id="M36068">
    <property type="protein sequence ID" value="AAA25149.1"/>
    <property type="molecule type" value="Genomic_DNA"/>
</dbReference>
<dbReference type="PIR" id="A36138">
    <property type="entry name" value="A36138"/>
</dbReference>
<dbReference type="PDB" id="1A5K">
    <property type="method" value="X-ray"/>
    <property type="resolution" value="2.20 A"/>
    <property type="chains" value="A=1-100"/>
</dbReference>
<dbReference type="PDB" id="1A5L">
    <property type="method" value="X-ray"/>
    <property type="resolution" value="2.20 A"/>
    <property type="chains" value="A=1-100"/>
</dbReference>
<dbReference type="PDB" id="1A5M">
    <property type="method" value="X-ray"/>
    <property type="resolution" value="2.00 A"/>
    <property type="chains" value="A=1-100"/>
</dbReference>
<dbReference type="PDB" id="1A5N">
    <property type="method" value="X-ray"/>
    <property type="resolution" value="2.40 A"/>
    <property type="chains" value="A=1-100"/>
</dbReference>
<dbReference type="PDB" id="1A5O">
    <property type="method" value="X-ray"/>
    <property type="resolution" value="2.50 A"/>
    <property type="chains" value="A=1-100"/>
</dbReference>
<dbReference type="PDB" id="1EF2">
    <property type="method" value="X-ray"/>
    <property type="resolution" value="2.50 A"/>
    <property type="chains" value="C=1-100"/>
</dbReference>
<dbReference type="PDB" id="1EJR">
    <property type="method" value="X-ray"/>
    <property type="resolution" value="2.00 A"/>
    <property type="chains" value="A=1-100"/>
</dbReference>
<dbReference type="PDB" id="1EJS">
    <property type="method" value="X-ray"/>
    <property type="resolution" value="2.00 A"/>
    <property type="chains" value="A=1-100"/>
</dbReference>
<dbReference type="PDB" id="1EJT">
    <property type="method" value="X-ray"/>
    <property type="resolution" value="2.00 A"/>
    <property type="chains" value="A=1-100"/>
</dbReference>
<dbReference type="PDB" id="1EJU">
    <property type="method" value="X-ray"/>
    <property type="resolution" value="2.00 A"/>
    <property type="chains" value="A=1-100"/>
</dbReference>
<dbReference type="PDB" id="1EJV">
    <property type="method" value="X-ray"/>
    <property type="resolution" value="2.40 A"/>
    <property type="chains" value="A=1-100"/>
</dbReference>
<dbReference type="PDB" id="1EJW">
    <property type="method" value="X-ray"/>
    <property type="resolution" value="1.90 A"/>
    <property type="chains" value="A=1-100"/>
</dbReference>
<dbReference type="PDB" id="1EJX">
    <property type="method" value="X-ray"/>
    <property type="resolution" value="1.60 A"/>
    <property type="chains" value="A=1-100"/>
</dbReference>
<dbReference type="PDB" id="1FWA">
    <property type="method" value="X-ray"/>
    <property type="resolution" value="2.00 A"/>
    <property type="chains" value="A=1-100"/>
</dbReference>
<dbReference type="PDB" id="1FWB">
    <property type="method" value="X-ray"/>
    <property type="resolution" value="2.00 A"/>
    <property type="chains" value="A=1-100"/>
</dbReference>
<dbReference type="PDB" id="1FWC">
    <property type="method" value="X-ray"/>
    <property type="resolution" value="2.00 A"/>
    <property type="chains" value="A=1-100"/>
</dbReference>
<dbReference type="PDB" id="1FWD">
    <property type="method" value="X-ray"/>
    <property type="resolution" value="2.00 A"/>
    <property type="chains" value="A=1-100"/>
</dbReference>
<dbReference type="PDB" id="1FWE">
    <property type="method" value="X-ray"/>
    <property type="resolution" value="2.00 A"/>
    <property type="chains" value="A=1-100"/>
</dbReference>
<dbReference type="PDB" id="1FWF">
    <property type="method" value="X-ray"/>
    <property type="resolution" value="2.00 A"/>
    <property type="chains" value="A=1-100"/>
</dbReference>
<dbReference type="PDB" id="1FWG">
    <property type="method" value="X-ray"/>
    <property type="resolution" value="2.00 A"/>
    <property type="chains" value="A=1-100"/>
</dbReference>
<dbReference type="PDB" id="1FWH">
    <property type="method" value="X-ray"/>
    <property type="resolution" value="2.00 A"/>
    <property type="chains" value="A=1-100"/>
</dbReference>
<dbReference type="PDB" id="1FWI">
    <property type="method" value="X-ray"/>
    <property type="resolution" value="2.00 A"/>
    <property type="chains" value="A=1-100"/>
</dbReference>
<dbReference type="PDB" id="1FWJ">
    <property type="method" value="X-ray"/>
    <property type="resolution" value="2.20 A"/>
    <property type="chains" value="A=1-100"/>
</dbReference>
<dbReference type="PDB" id="1KRA">
    <property type="method" value="X-ray"/>
    <property type="resolution" value="2.30 A"/>
    <property type="chains" value="A=1-100"/>
</dbReference>
<dbReference type="PDB" id="1KRB">
    <property type="method" value="X-ray"/>
    <property type="resolution" value="2.50 A"/>
    <property type="chains" value="A=1-100"/>
</dbReference>
<dbReference type="PDB" id="1KRC">
    <property type="method" value="X-ray"/>
    <property type="resolution" value="2.50 A"/>
    <property type="chains" value="A=1-100"/>
</dbReference>
<dbReference type="PDB" id="2KAU">
    <property type="method" value="X-ray"/>
    <property type="resolution" value="2.00 A"/>
    <property type="chains" value="A=1-100"/>
</dbReference>
<dbReference type="PDB" id="4EP8">
    <property type="method" value="X-ray"/>
    <property type="resolution" value="1.55 A"/>
    <property type="chains" value="A=1-100"/>
</dbReference>
<dbReference type="PDB" id="4EPB">
    <property type="method" value="X-ray"/>
    <property type="resolution" value="1.75 A"/>
    <property type="chains" value="A=1-100"/>
</dbReference>
<dbReference type="PDB" id="4EPD">
    <property type="method" value="X-ray"/>
    <property type="resolution" value="1.70 A"/>
    <property type="chains" value="A=1-100"/>
</dbReference>
<dbReference type="PDB" id="4EPE">
    <property type="method" value="X-ray"/>
    <property type="resolution" value="2.05 A"/>
    <property type="chains" value="A=1-100"/>
</dbReference>
<dbReference type="PDBsum" id="1A5K"/>
<dbReference type="PDBsum" id="1A5L"/>
<dbReference type="PDBsum" id="1A5M"/>
<dbReference type="PDBsum" id="1A5N"/>
<dbReference type="PDBsum" id="1A5O"/>
<dbReference type="PDBsum" id="1EF2"/>
<dbReference type="PDBsum" id="1EJR"/>
<dbReference type="PDBsum" id="1EJS"/>
<dbReference type="PDBsum" id="1EJT"/>
<dbReference type="PDBsum" id="1EJU"/>
<dbReference type="PDBsum" id="1EJV"/>
<dbReference type="PDBsum" id="1EJW"/>
<dbReference type="PDBsum" id="1EJX"/>
<dbReference type="PDBsum" id="1FWA"/>
<dbReference type="PDBsum" id="1FWB"/>
<dbReference type="PDBsum" id="1FWC"/>
<dbReference type="PDBsum" id="1FWD"/>
<dbReference type="PDBsum" id="1FWE"/>
<dbReference type="PDBsum" id="1FWF"/>
<dbReference type="PDBsum" id="1FWG"/>
<dbReference type="PDBsum" id="1FWH"/>
<dbReference type="PDBsum" id="1FWI"/>
<dbReference type="PDBsum" id="1FWJ"/>
<dbReference type="PDBsum" id="1KRA"/>
<dbReference type="PDBsum" id="1KRB"/>
<dbReference type="PDBsum" id="1KRC"/>
<dbReference type="PDBsum" id="2KAU"/>
<dbReference type="PDBsum" id="4EP8"/>
<dbReference type="PDBsum" id="4EPB"/>
<dbReference type="PDBsum" id="4EPD"/>
<dbReference type="PDBsum" id="4EPE"/>
<dbReference type="SMR" id="P18316"/>
<dbReference type="IntAct" id="P18316">
    <property type="interactions" value="2"/>
</dbReference>
<dbReference type="BRENDA" id="3.5.1.5">
    <property type="organism ID" value="152"/>
</dbReference>
<dbReference type="SABIO-RK" id="P18316"/>
<dbReference type="UniPathway" id="UPA00258">
    <property type="reaction ID" value="UER00370"/>
</dbReference>
<dbReference type="EvolutionaryTrace" id="P18316"/>
<dbReference type="GO" id="GO:0005737">
    <property type="term" value="C:cytoplasm"/>
    <property type="evidence" value="ECO:0007669"/>
    <property type="project" value="UniProtKB-SubCell"/>
</dbReference>
<dbReference type="GO" id="GO:0016151">
    <property type="term" value="F:nickel cation binding"/>
    <property type="evidence" value="ECO:0007669"/>
    <property type="project" value="InterPro"/>
</dbReference>
<dbReference type="GO" id="GO:0009039">
    <property type="term" value="F:urease activity"/>
    <property type="evidence" value="ECO:0007669"/>
    <property type="project" value="UniProtKB-UniRule"/>
</dbReference>
<dbReference type="GO" id="GO:0043419">
    <property type="term" value="P:urea catabolic process"/>
    <property type="evidence" value="ECO:0007669"/>
    <property type="project" value="UniProtKB-UniRule"/>
</dbReference>
<dbReference type="CDD" id="cd00390">
    <property type="entry name" value="Urease_gamma"/>
    <property type="match status" value="1"/>
</dbReference>
<dbReference type="Gene3D" id="3.30.280.10">
    <property type="entry name" value="Urease, gamma-like subunit"/>
    <property type="match status" value="1"/>
</dbReference>
<dbReference type="HAMAP" id="MF_00739">
    <property type="entry name" value="Urease_gamma"/>
    <property type="match status" value="1"/>
</dbReference>
<dbReference type="InterPro" id="IPR012010">
    <property type="entry name" value="Urease_gamma"/>
</dbReference>
<dbReference type="InterPro" id="IPR002026">
    <property type="entry name" value="Urease_gamma/gamma-beta_su"/>
</dbReference>
<dbReference type="InterPro" id="IPR036463">
    <property type="entry name" value="Urease_gamma_sf"/>
</dbReference>
<dbReference type="InterPro" id="IPR050069">
    <property type="entry name" value="Urease_subunit"/>
</dbReference>
<dbReference type="NCBIfam" id="NF009712">
    <property type="entry name" value="PRK13241.1"/>
    <property type="match status" value="1"/>
</dbReference>
<dbReference type="NCBIfam" id="TIGR00193">
    <property type="entry name" value="urease_gam"/>
    <property type="match status" value="1"/>
</dbReference>
<dbReference type="PANTHER" id="PTHR33569">
    <property type="entry name" value="UREASE"/>
    <property type="match status" value="1"/>
</dbReference>
<dbReference type="PANTHER" id="PTHR33569:SF1">
    <property type="entry name" value="UREASE"/>
    <property type="match status" value="1"/>
</dbReference>
<dbReference type="Pfam" id="PF00547">
    <property type="entry name" value="Urease_gamma"/>
    <property type="match status" value="1"/>
</dbReference>
<dbReference type="PIRSF" id="PIRSF001223">
    <property type="entry name" value="Urease_gamma"/>
    <property type="match status" value="1"/>
</dbReference>
<dbReference type="SUPFAM" id="SSF54111">
    <property type="entry name" value="Urease, gamma-subunit"/>
    <property type="match status" value="1"/>
</dbReference>
<sequence length="100" mass="11087">MELTPREKDKLLLFTAALVAERRLARGLKLNYPESVALISAFIMEGARDGKSVASLMEEGRHVLTREQVMEGVPEMIPDIQVEATFPDGSKLVTVHNPII</sequence>
<feature type="chain" id="PRO_0000098015" description="Urease subunit gamma">
    <location>
        <begin position="1"/>
        <end position="100"/>
    </location>
</feature>
<feature type="helix" evidence="20">
    <location>
        <begin position="5"/>
        <end position="25"/>
    </location>
</feature>
<feature type="helix" evidence="20">
    <location>
        <begin position="32"/>
        <end position="49"/>
    </location>
</feature>
<feature type="helix" evidence="20">
    <location>
        <begin position="53"/>
        <end position="59"/>
    </location>
</feature>
<feature type="helix" evidence="20">
    <location>
        <begin position="60"/>
        <end position="62"/>
    </location>
</feature>
<feature type="helix" evidence="20">
    <location>
        <begin position="66"/>
        <end position="68"/>
    </location>
</feature>
<feature type="helix" evidence="20">
    <location>
        <begin position="73"/>
        <end position="76"/>
    </location>
</feature>
<feature type="strand" evidence="20">
    <location>
        <begin position="78"/>
        <end position="86"/>
    </location>
</feature>
<feature type="strand" evidence="20">
    <location>
        <begin position="89"/>
        <end position="97"/>
    </location>
</feature>
<accession>P18316</accession>
<reference key="1">
    <citation type="journal article" date="1990" name="J. Bacteriol.">
        <title>Sequence of the Klebsiella aerogenes urease genes and evidence for accessory proteins facilitating nickel incorporation.</title>
        <authorList>
            <person name="Mulrooney S.B."/>
            <person name="Hausinger R.P."/>
        </authorList>
    </citation>
    <scope>NUCLEOTIDE SEQUENCE [GENOMIC DNA]</scope>
    <scope>CATALYTIC ACTIVITY</scope>
    <source>
        <strain>CG253</strain>
    </source>
</reference>
<reference key="2">
    <citation type="journal article" date="1992" name="J. Biol. Chem.">
        <title>Site-directed mutagenesis of the active site cysteine in Klebsiella aerogenes urease.</title>
        <authorList>
            <person name="Martin P.R."/>
            <person name="Hausinger R.P."/>
        </authorList>
    </citation>
    <scope>CATALYTIC ACTIVITY</scope>
    <scope>BIOPHYSICOCHEMICAL PROPERTIES</scope>
</reference>
<reference key="3">
    <citation type="journal article" date="1993" name="Protein Sci.">
        <title>Site-directed mutagenesis of Klebsiella aerogenes urease: identification of histidine residues that appear to function in nickel ligation, substrate binding, and catalysis.</title>
        <authorList>
            <person name="Park I.-S."/>
            <person name="Hausinger R.P."/>
        </authorList>
    </citation>
    <scope>CATALYTIC ACTIVITY</scope>
    <scope>BIOPHYSICOCHEMICAL PROPERTIES</scope>
</reference>
<reference key="4">
    <citation type="journal article" date="1994" name="Proc. Natl. Acad. Sci. U.S.A.">
        <title>In vitro activation of urease apoprotein and role of UreD as a chaperone required for nickel metallocenter assembly.</title>
        <authorList>
            <person name="Park I.-S."/>
            <person name="Carr M.B."/>
            <person name="Hausinger R.P."/>
        </authorList>
    </citation>
    <scope>CATALYTIC ACTIVITY</scope>
    <scope>INTERACTION WITH UREB; UREC AND URED</scope>
</reference>
<reference key="5">
    <citation type="journal article" date="1995" name="J. Bacteriol.">
        <title>Evidence for the presence of urease apoprotein complexes containing UreD, UreF, and UreG in cells that are competent for in vivo enzyme activation.</title>
        <authorList>
            <person name="Park I.-S."/>
            <person name="Hausinger R.P."/>
        </authorList>
    </citation>
    <scope>CATALYTIC ACTIVITY</scope>
    <scope>INTERACTION WITH UREB; UREC; URED; UREF AND UREG</scope>
</reference>
<reference key="6">
    <citation type="journal article" date="1995" name="Science">
        <title>Requirement of carbon dioxide for in vitro assembly of the urease nickel metallocenter.</title>
        <authorList>
            <person name="Park I.-S."/>
            <person name="Hausinger R.P."/>
        </authorList>
    </citation>
    <scope>CATALYTIC ACTIVITY</scope>
    <scope>ACTIVITY REGULATION</scope>
</reference>
<reference key="7">
    <citation type="journal article" date="1996" name="J. Bacteriol.">
        <title>Purification and activation properties of UreD-UreF-urease apoprotein complexes.</title>
        <authorList>
            <person name="Moncrief M.B.C."/>
            <person name="Hausinger R.P."/>
        </authorList>
    </citation>
    <scope>CATALYTIC ACTIVITY</scope>
    <scope>ACTIVITY REGULATION</scope>
    <scope>INTERACTION WITH UREB; UREC; URED AND UREF</scope>
</reference>
<reference key="8">
    <citation type="journal article" date="1999" name="Proc. Natl. Acad. Sci. U.S.A.">
        <title>GTP-dependent activation of urease apoprotein in complex with the UreD, UreF, and UreG accessory proteins.</title>
        <authorList>
            <person name="Soriano A."/>
            <person name="Hausinger R.P."/>
        </authorList>
    </citation>
    <scope>CATALYTIC ACTIVITY</scope>
    <scope>ACTIVITY REGULATION</scope>
    <scope>INTERACTION WITH UREB; UREC; URED; UREF AND UREG</scope>
</reference>
<reference key="9">
    <citation type="journal article" date="2000" name="Biochemistry">
        <title>UreE stimulation of GTP-dependent urease activation in the UreD-UreF-UreG-urease apoprotein complex.</title>
        <authorList>
            <person name="Soriano A."/>
            <person name="Colpas G.J."/>
            <person name="Hausinger R.P."/>
        </authorList>
    </citation>
    <scope>CATALYTIC ACTIVITY</scope>
    <scope>ACTIVITY REGULATION</scope>
    <scope>ACTIVATION OF THE APOPROTEIN BY UREE</scope>
</reference>
<reference key="10">
    <citation type="journal article" date="2001" name="Arch. Biochem. Biophys.">
        <title>Dual effects of ionic strength on Klebsiella aerogenes urease: pH-dependent activation and inhibition.</title>
        <authorList>
            <person name="Mulrooney S.B."/>
            <person name="Zakharian T."/>
            <person name="Schaller R.A."/>
            <person name="Hausinger R.P."/>
        </authorList>
    </citation>
    <scope>BIOPHYSICOCHEMICAL PROPERTIES</scope>
</reference>
<reference key="11">
    <citation type="journal article" date="2004" name="J. Biol. Chem.">
        <title>Chemical cross-linking and mass spectrometric identification of sites of interaction for UreD, UreF, and urease.</title>
        <authorList>
            <person name="Chang Z."/>
            <person name="Kuchar J."/>
            <person name="Hausinger R.P."/>
        </authorList>
    </citation>
    <scope>INTERACTION WITH UREB; UREC; URED AND UREF</scope>
    <scope>IDENTIFICATION BY MASS SPECTROMETRY</scope>
</reference>
<reference key="12">
    <citation type="journal article" date="1995" name="Science">
        <title>The crystal structure of urease from Klebsiella aerogenes.</title>
        <authorList>
            <person name="Jabri E."/>
            <person name="Carr M.B."/>
            <person name="Hausinger R.P."/>
            <person name="Karplus P.A."/>
        </authorList>
    </citation>
    <scope>X-RAY CRYSTALLOGRAPHY (2.2 ANGSTROMS) IN COMPLEX WITH UREB AND UREC</scope>
</reference>
<reference key="13">
    <citation type="journal article" date="1996" name="Biochemistry">
        <title>Structures of the Klebsiella aerogenes urease apoenzyme and two active-site mutants.</title>
        <authorList>
            <person name="Jabri E."/>
            <person name="Karplus P.A."/>
        </authorList>
    </citation>
    <scope>X-RAY CRYSTALLOGRAPHY (2.3 ANGSTROMS) IN COMPLEX WITH UREB AND UREC</scope>
</reference>
<reference key="14">
    <citation type="journal article" date="1996" name="J. Biol. Chem.">
        <title>Characterization of the mononickel metallocenter in H134A mutant urease.</title>
        <authorList>
            <person name="Park I.-S."/>
            <person name="Michel L.O."/>
            <person name="Pearson M.A."/>
            <person name="Jabri E."/>
            <person name="Karplus P.A."/>
            <person name="Wang S."/>
            <person name="Dong J."/>
            <person name="Scott R.A."/>
            <person name="Koehler B.P."/>
            <person name="Johnson M.K."/>
            <person name="Hausinger R.P."/>
        </authorList>
    </citation>
    <scope>X-RAY CRYSTALLOGRAPHY (2.0 ANGSTROMS) IN COMPLEX WITH UREB AND UREC</scope>
</reference>
<reference key="15">
    <citation type="journal article" date="1997" name="Biochemistry">
        <title>Structures of Cys319 variants and acetohydroxamate-inhibited Klebsiella aerogenes urease.</title>
        <authorList>
            <person name="Pearson M.A."/>
            <person name="Michel L.O."/>
            <person name="Hausinger R.P."/>
            <person name="Karplus P.A."/>
        </authorList>
    </citation>
    <scope>X-RAY CRYSTALLOGRAPHY (2.0 ANGSTROMS) IN COMPLEX WITH UREB; UREC AND ACETOHYDROXAMIC ACID</scope>
</reference>
<reference key="16">
    <citation type="journal article" date="1998" name="Biochemistry">
        <title>Chemical rescue of Klebsiella aerogenes urease variants lacking the carbamylated-lysine nickel ligand.</title>
        <authorList>
            <person name="Pearson M.A."/>
            <person name="Schaller R.A."/>
            <person name="Michel L.O."/>
            <person name="Karplus P.A."/>
            <person name="Hausinger R.P."/>
        </authorList>
    </citation>
    <scope>X-RAY CRYSTALLOGRAPHY (2.0 ANGSTROMS) IN COMPLEX WITH UREB; UREC AND FORMATE</scope>
</reference>
<reference key="17">
    <citation type="journal article" date="1999" name="J. Biol. Inorg. Chem.">
        <title>Characterization of metal-substituted Klebsiella aerogenes urease.</title>
        <authorList>
            <person name="Yamaguchi K."/>
            <person name="Cosper N.J."/>
            <person name="Staalhandske C."/>
            <person name="Scott R.A."/>
            <person name="Pearson M.A."/>
            <person name="Karplus P.A."/>
            <person name="Hausinger R.P."/>
        </authorList>
    </citation>
    <scope>X-RAY CRYSTALLOGRAPHY (2.5 ANGSTROMS) IN COMPLEX WITH UREB AND UREC</scope>
</reference>
<reference key="18">
    <citation type="journal article" date="2000" name="Biochemistry">
        <title>Kinetic and structural characterization of urease active site variants.</title>
        <authorList>
            <person name="Pearson M.A."/>
            <person name="Park I.-S."/>
            <person name="Schaller R.A."/>
            <person name="Michel L.O."/>
            <person name="Karplus P.A."/>
            <person name="Hausinger R.P."/>
        </authorList>
    </citation>
    <scope>X-RAY CRYSTALLOGRAPHY (1.6 ANGSTROMS) IN COMPLEX WITH UREB AND UREC</scope>
    <scope>BIOPHYSICOCHEMICAL PROPERTIES</scope>
</reference>
<evidence type="ECO:0000255" key="1">
    <source>
        <dbReference type="HAMAP-Rule" id="MF_00739"/>
    </source>
</evidence>
<evidence type="ECO:0000269" key="2">
    <source>
    </source>
</evidence>
<evidence type="ECO:0000269" key="3">
    <source>
    </source>
</evidence>
<evidence type="ECO:0000269" key="4">
    <source>
    </source>
</evidence>
<evidence type="ECO:0000269" key="5">
    <source>
    </source>
</evidence>
<evidence type="ECO:0000269" key="6">
    <source>
    </source>
</evidence>
<evidence type="ECO:0000269" key="7">
    <source>
    </source>
</evidence>
<evidence type="ECO:0000269" key="8">
    <source>
    </source>
</evidence>
<evidence type="ECO:0000269" key="9">
    <source>
    </source>
</evidence>
<evidence type="ECO:0000269" key="10">
    <source>
    </source>
</evidence>
<evidence type="ECO:0000269" key="11">
    <source>
    </source>
</evidence>
<evidence type="ECO:0000269" key="12">
    <source>
    </source>
</evidence>
<evidence type="ECO:0000269" key="13">
    <source>
    </source>
</evidence>
<evidence type="ECO:0000269" key="14">
    <source>
    </source>
</evidence>
<evidence type="ECO:0000269" key="15">
    <source>
    </source>
</evidence>
<evidence type="ECO:0000269" key="16">
    <source>
    </source>
</evidence>
<evidence type="ECO:0000269" key="17">
    <source>
    </source>
</evidence>
<evidence type="ECO:0000269" key="18">
    <source>
    </source>
</evidence>
<evidence type="ECO:0000269" key="19">
    <source>
    </source>
</evidence>
<evidence type="ECO:0007829" key="20">
    <source>
        <dbReference type="PDB" id="4EP8"/>
    </source>
</evidence>
<proteinExistence type="evidence at protein level"/>
<keyword id="KW-0002">3D-structure</keyword>
<keyword id="KW-0963">Cytoplasm</keyword>
<keyword id="KW-0378">Hydrolase</keyword>
<name>URE3_KLEAE</name>
<organism>
    <name type="scientific">Klebsiella aerogenes</name>
    <name type="common">Enterobacter aerogenes</name>
    <dbReference type="NCBI Taxonomy" id="548"/>
    <lineage>
        <taxon>Bacteria</taxon>
        <taxon>Pseudomonadati</taxon>
        <taxon>Pseudomonadota</taxon>
        <taxon>Gammaproteobacteria</taxon>
        <taxon>Enterobacterales</taxon>
        <taxon>Enterobacteriaceae</taxon>
        <taxon>Klebsiella/Raoultella group</taxon>
        <taxon>Klebsiella</taxon>
    </lineage>
</organism>